<gene>
    <name evidence="1" type="primary">leuD1</name>
    <name type="ordered locus">BP1356</name>
</gene>
<proteinExistence type="inferred from homology"/>
<feature type="chain" id="PRO_0000141792" description="3-isopropylmalate dehydratase small subunit 1">
    <location>
        <begin position="1"/>
        <end position="202"/>
    </location>
</feature>
<accession>Q7VYI1</accession>
<organism>
    <name type="scientific">Bordetella pertussis (strain Tohama I / ATCC BAA-589 / NCTC 13251)</name>
    <dbReference type="NCBI Taxonomy" id="257313"/>
    <lineage>
        <taxon>Bacteria</taxon>
        <taxon>Pseudomonadati</taxon>
        <taxon>Pseudomonadota</taxon>
        <taxon>Betaproteobacteria</taxon>
        <taxon>Burkholderiales</taxon>
        <taxon>Alcaligenaceae</taxon>
        <taxon>Bordetella</taxon>
    </lineage>
</organism>
<sequence length="202" mass="22125">MQAFIRAHGIILPMNQDHVDTDAIIPQRWLVTVERDGLADGFMGAWRYDEHGQPRPECVLNQPAYQGAAIVLARENYGCGSSREHAVWAHQGYGIRAIVAASYGPIFHENCLKNGLLPVTLPAADVATLMAQALADPGCACEVDLVSQRVIGPDGRAYPFEIDAGRRQLLLEGVDDIDLALARAADIAAFQRRQQQDQPWLA</sequence>
<dbReference type="EC" id="4.2.1.33" evidence="1"/>
<dbReference type="EMBL" id="BX640415">
    <property type="protein sequence ID" value="CAE41648.1"/>
    <property type="molecule type" value="Genomic_DNA"/>
</dbReference>
<dbReference type="RefSeq" id="NP_880107.1">
    <property type="nucleotide sequence ID" value="NC_002929.2"/>
</dbReference>
<dbReference type="SMR" id="Q7VYI1"/>
<dbReference type="STRING" id="257313.BP1356"/>
<dbReference type="PaxDb" id="257313-BP1356"/>
<dbReference type="KEGG" id="bpe:BP1356"/>
<dbReference type="PATRIC" id="fig|257313.5.peg.1456"/>
<dbReference type="eggNOG" id="COG0066">
    <property type="taxonomic scope" value="Bacteria"/>
</dbReference>
<dbReference type="HOGENOM" id="CLU_081378_0_3_4"/>
<dbReference type="UniPathway" id="UPA00048">
    <property type="reaction ID" value="UER00071"/>
</dbReference>
<dbReference type="Proteomes" id="UP000002676">
    <property type="component" value="Chromosome"/>
</dbReference>
<dbReference type="GO" id="GO:0009316">
    <property type="term" value="C:3-isopropylmalate dehydratase complex"/>
    <property type="evidence" value="ECO:0007669"/>
    <property type="project" value="InterPro"/>
</dbReference>
<dbReference type="GO" id="GO:0003861">
    <property type="term" value="F:3-isopropylmalate dehydratase activity"/>
    <property type="evidence" value="ECO:0007669"/>
    <property type="project" value="UniProtKB-UniRule"/>
</dbReference>
<dbReference type="GO" id="GO:0009098">
    <property type="term" value="P:L-leucine biosynthetic process"/>
    <property type="evidence" value="ECO:0007669"/>
    <property type="project" value="UniProtKB-UniRule"/>
</dbReference>
<dbReference type="CDD" id="cd01577">
    <property type="entry name" value="IPMI_Swivel"/>
    <property type="match status" value="1"/>
</dbReference>
<dbReference type="FunFam" id="3.20.19.10:FF:000003">
    <property type="entry name" value="3-isopropylmalate dehydratase small subunit"/>
    <property type="match status" value="1"/>
</dbReference>
<dbReference type="Gene3D" id="3.20.19.10">
    <property type="entry name" value="Aconitase, domain 4"/>
    <property type="match status" value="1"/>
</dbReference>
<dbReference type="HAMAP" id="MF_01031">
    <property type="entry name" value="LeuD_type1"/>
    <property type="match status" value="1"/>
</dbReference>
<dbReference type="InterPro" id="IPR004431">
    <property type="entry name" value="3-IsopropMal_deHydase_ssu"/>
</dbReference>
<dbReference type="InterPro" id="IPR015928">
    <property type="entry name" value="Aconitase/3IPM_dehydase_swvl"/>
</dbReference>
<dbReference type="InterPro" id="IPR000573">
    <property type="entry name" value="AconitaseA/IPMdHydase_ssu_swvl"/>
</dbReference>
<dbReference type="InterPro" id="IPR033940">
    <property type="entry name" value="IPMI_Swivel"/>
</dbReference>
<dbReference type="InterPro" id="IPR050075">
    <property type="entry name" value="LeuD"/>
</dbReference>
<dbReference type="NCBIfam" id="TIGR00171">
    <property type="entry name" value="leuD"/>
    <property type="match status" value="1"/>
</dbReference>
<dbReference type="NCBIfam" id="NF002458">
    <property type="entry name" value="PRK01641.1"/>
    <property type="match status" value="1"/>
</dbReference>
<dbReference type="PANTHER" id="PTHR43345:SF5">
    <property type="entry name" value="3-ISOPROPYLMALATE DEHYDRATASE SMALL SUBUNIT"/>
    <property type="match status" value="1"/>
</dbReference>
<dbReference type="PANTHER" id="PTHR43345">
    <property type="entry name" value="3-ISOPROPYLMALATE DEHYDRATASE SMALL SUBUNIT 2-RELATED-RELATED"/>
    <property type="match status" value="1"/>
</dbReference>
<dbReference type="Pfam" id="PF00694">
    <property type="entry name" value="Aconitase_C"/>
    <property type="match status" value="1"/>
</dbReference>
<dbReference type="SUPFAM" id="SSF52016">
    <property type="entry name" value="LeuD/IlvD-like"/>
    <property type="match status" value="1"/>
</dbReference>
<keyword id="KW-0028">Amino-acid biosynthesis</keyword>
<keyword id="KW-0100">Branched-chain amino acid biosynthesis</keyword>
<keyword id="KW-0432">Leucine biosynthesis</keyword>
<keyword id="KW-0456">Lyase</keyword>
<keyword id="KW-1185">Reference proteome</keyword>
<comment type="function">
    <text evidence="1">Catalyzes the isomerization between 2-isopropylmalate and 3-isopropylmalate, via the formation of 2-isopropylmaleate.</text>
</comment>
<comment type="catalytic activity">
    <reaction evidence="1">
        <text>(2R,3S)-3-isopropylmalate = (2S)-2-isopropylmalate</text>
        <dbReference type="Rhea" id="RHEA:32287"/>
        <dbReference type="ChEBI" id="CHEBI:1178"/>
        <dbReference type="ChEBI" id="CHEBI:35121"/>
        <dbReference type="EC" id="4.2.1.33"/>
    </reaction>
</comment>
<comment type="pathway">
    <text evidence="1">Amino-acid biosynthesis; L-leucine biosynthesis; L-leucine from 3-methyl-2-oxobutanoate: step 2/4.</text>
</comment>
<comment type="subunit">
    <text evidence="1">Heterodimer of LeuC and LeuD.</text>
</comment>
<comment type="similarity">
    <text evidence="1">Belongs to the LeuD family. LeuD type 1 subfamily.</text>
</comment>
<evidence type="ECO:0000255" key="1">
    <source>
        <dbReference type="HAMAP-Rule" id="MF_01031"/>
    </source>
</evidence>
<name>LEUD1_BORPE</name>
<protein>
    <recommendedName>
        <fullName evidence="1">3-isopropylmalate dehydratase small subunit 1</fullName>
        <ecNumber evidence="1">4.2.1.33</ecNumber>
    </recommendedName>
    <alternativeName>
        <fullName evidence="1">Alpha-IPM isomerase 1</fullName>
        <shortName evidence="1">IPMI 1</shortName>
    </alternativeName>
    <alternativeName>
        <fullName evidence="1">Isopropylmalate isomerase 1</fullName>
    </alternativeName>
</protein>
<reference key="1">
    <citation type="journal article" date="2003" name="Nat. Genet.">
        <title>Comparative analysis of the genome sequences of Bordetella pertussis, Bordetella parapertussis and Bordetella bronchiseptica.</title>
        <authorList>
            <person name="Parkhill J."/>
            <person name="Sebaihia M."/>
            <person name="Preston A."/>
            <person name="Murphy L.D."/>
            <person name="Thomson N.R."/>
            <person name="Harris D.E."/>
            <person name="Holden M.T.G."/>
            <person name="Churcher C.M."/>
            <person name="Bentley S.D."/>
            <person name="Mungall K.L."/>
            <person name="Cerdeno-Tarraga A.-M."/>
            <person name="Temple L."/>
            <person name="James K.D."/>
            <person name="Harris B."/>
            <person name="Quail M.A."/>
            <person name="Achtman M."/>
            <person name="Atkin R."/>
            <person name="Baker S."/>
            <person name="Basham D."/>
            <person name="Bason N."/>
            <person name="Cherevach I."/>
            <person name="Chillingworth T."/>
            <person name="Collins M."/>
            <person name="Cronin A."/>
            <person name="Davis P."/>
            <person name="Doggett J."/>
            <person name="Feltwell T."/>
            <person name="Goble A."/>
            <person name="Hamlin N."/>
            <person name="Hauser H."/>
            <person name="Holroyd S."/>
            <person name="Jagels K."/>
            <person name="Leather S."/>
            <person name="Moule S."/>
            <person name="Norberczak H."/>
            <person name="O'Neil S."/>
            <person name="Ormond D."/>
            <person name="Price C."/>
            <person name="Rabbinowitsch E."/>
            <person name="Rutter S."/>
            <person name="Sanders M."/>
            <person name="Saunders D."/>
            <person name="Seeger K."/>
            <person name="Sharp S."/>
            <person name="Simmonds M."/>
            <person name="Skelton J."/>
            <person name="Squares R."/>
            <person name="Squares S."/>
            <person name="Stevens K."/>
            <person name="Unwin L."/>
            <person name="Whitehead S."/>
            <person name="Barrell B.G."/>
            <person name="Maskell D.J."/>
        </authorList>
    </citation>
    <scope>NUCLEOTIDE SEQUENCE [LARGE SCALE GENOMIC DNA]</scope>
    <source>
        <strain>Tohama I / ATCC BAA-589 / NCTC 13251</strain>
    </source>
</reference>